<organism>
    <name type="scientific">Bacillus subtilis (strain 168)</name>
    <dbReference type="NCBI Taxonomy" id="224308"/>
    <lineage>
        <taxon>Bacteria</taxon>
        <taxon>Bacillati</taxon>
        <taxon>Bacillota</taxon>
        <taxon>Bacilli</taxon>
        <taxon>Bacillales</taxon>
        <taxon>Bacillaceae</taxon>
        <taxon>Bacillus</taxon>
    </lineage>
</organism>
<gene>
    <name type="primary">ypiF</name>
    <name type="ordered locus">BSU22570</name>
</gene>
<dbReference type="EMBL" id="L47709">
    <property type="protein sequence ID" value="AAB38434.1"/>
    <property type="molecule type" value="Genomic_DNA"/>
</dbReference>
<dbReference type="EMBL" id="AL009126">
    <property type="protein sequence ID" value="CAB14173.1"/>
    <property type="molecule type" value="Genomic_DNA"/>
</dbReference>
<dbReference type="EMBL" id="U25535">
    <property type="status" value="NOT_ANNOTATED_CDS"/>
    <property type="molecule type" value="Genomic_DNA"/>
</dbReference>
<dbReference type="PIR" id="G69936">
    <property type="entry name" value="G69936"/>
</dbReference>
<dbReference type="RefSeq" id="NP_390138.1">
    <property type="nucleotide sequence ID" value="NC_000964.3"/>
</dbReference>
<dbReference type="RefSeq" id="WP_003246201.1">
    <property type="nucleotide sequence ID" value="NZ_OZ025638.1"/>
</dbReference>
<dbReference type="FunCoup" id="P54391">
    <property type="interactions" value="27"/>
</dbReference>
<dbReference type="STRING" id="224308.BSU22570"/>
<dbReference type="PaxDb" id="224308-BSU22570"/>
<dbReference type="EnsemblBacteria" id="CAB14173">
    <property type="protein sequence ID" value="CAB14173"/>
    <property type="gene ID" value="BSU_22570"/>
</dbReference>
<dbReference type="GeneID" id="939015"/>
<dbReference type="KEGG" id="bsu:BSU22570"/>
<dbReference type="PATRIC" id="fig|224308.179.peg.2461"/>
<dbReference type="eggNOG" id="ENOG5032SRK">
    <property type="taxonomic scope" value="Bacteria"/>
</dbReference>
<dbReference type="InParanoid" id="P54391"/>
<dbReference type="OrthoDB" id="2678750at2"/>
<dbReference type="BioCyc" id="BSUB:BSU22570-MONOMER"/>
<dbReference type="Proteomes" id="UP000001570">
    <property type="component" value="Chromosome"/>
</dbReference>
<dbReference type="InterPro" id="IPR019615">
    <property type="entry name" value="DUF2487"/>
</dbReference>
<dbReference type="Pfam" id="PF10673">
    <property type="entry name" value="DUF2487"/>
    <property type="match status" value="1"/>
</dbReference>
<name>YPIF_BACSU</name>
<proteinExistence type="predicted"/>
<reference key="1">
    <citation type="journal article" date="1996" name="Microbiology">
        <title>Sequence analysis of the Bacillus subtilis chromosome region between the serA and kdg loci cloned in a yeast artificial chromosome.</title>
        <authorList>
            <person name="Sorokin A.V."/>
            <person name="Azevedo V."/>
            <person name="Zumstein E."/>
            <person name="Galleron N."/>
            <person name="Ehrlich S.D."/>
            <person name="Serror P."/>
        </authorList>
    </citation>
    <scope>NUCLEOTIDE SEQUENCE [GENOMIC DNA]</scope>
    <source>
        <strain>168 / Marburg / ATCC 6051 / DSM 10 / JCM 1465 / NBRC 13719 / NCIMB 3610 / NRRL NRS-744 / VKM B-501</strain>
    </source>
</reference>
<reference key="2">
    <citation type="journal article" date="1997" name="Nature">
        <title>The complete genome sequence of the Gram-positive bacterium Bacillus subtilis.</title>
        <authorList>
            <person name="Kunst F."/>
            <person name="Ogasawara N."/>
            <person name="Moszer I."/>
            <person name="Albertini A.M."/>
            <person name="Alloni G."/>
            <person name="Azevedo V."/>
            <person name="Bertero M.G."/>
            <person name="Bessieres P."/>
            <person name="Bolotin A."/>
            <person name="Borchert S."/>
            <person name="Borriss R."/>
            <person name="Boursier L."/>
            <person name="Brans A."/>
            <person name="Braun M."/>
            <person name="Brignell S.C."/>
            <person name="Bron S."/>
            <person name="Brouillet S."/>
            <person name="Bruschi C.V."/>
            <person name="Caldwell B."/>
            <person name="Capuano V."/>
            <person name="Carter N.M."/>
            <person name="Choi S.-K."/>
            <person name="Codani J.-J."/>
            <person name="Connerton I.F."/>
            <person name="Cummings N.J."/>
            <person name="Daniel R.A."/>
            <person name="Denizot F."/>
            <person name="Devine K.M."/>
            <person name="Duesterhoeft A."/>
            <person name="Ehrlich S.D."/>
            <person name="Emmerson P.T."/>
            <person name="Entian K.-D."/>
            <person name="Errington J."/>
            <person name="Fabret C."/>
            <person name="Ferrari E."/>
            <person name="Foulger D."/>
            <person name="Fritz C."/>
            <person name="Fujita M."/>
            <person name="Fujita Y."/>
            <person name="Fuma S."/>
            <person name="Galizzi A."/>
            <person name="Galleron N."/>
            <person name="Ghim S.-Y."/>
            <person name="Glaser P."/>
            <person name="Goffeau A."/>
            <person name="Golightly E.J."/>
            <person name="Grandi G."/>
            <person name="Guiseppi G."/>
            <person name="Guy B.J."/>
            <person name="Haga K."/>
            <person name="Haiech J."/>
            <person name="Harwood C.R."/>
            <person name="Henaut A."/>
            <person name="Hilbert H."/>
            <person name="Holsappel S."/>
            <person name="Hosono S."/>
            <person name="Hullo M.-F."/>
            <person name="Itaya M."/>
            <person name="Jones L.-M."/>
            <person name="Joris B."/>
            <person name="Karamata D."/>
            <person name="Kasahara Y."/>
            <person name="Klaerr-Blanchard M."/>
            <person name="Klein C."/>
            <person name="Kobayashi Y."/>
            <person name="Koetter P."/>
            <person name="Koningstein G."/>
            <person name="Krogh S."/>
            <person name="Kumano M."/>
            <person name="Kurita K."/>
            <person name="Lapidus A."/>
            <person name="Lardinois S."/>
            <person name="Lauber J."/>
            <person name="Lazarevic V."/>
            <person name="Lee S.-M."/>
            <person name="Levine A."/>
            <person name="Liu H."/>
            <person name="Masuda S."/>
            <person name="Mauel C."/>
            <person name="Medigue C."/>
            <person name="Medina N."/>
            <person name="Mellado R.P."/>
            <person name="Mizuno M."/>
            <person name="Moestl D."/>
            <person name="Nakai S."/>
            <person name="Noback M."/>
            <person name="Noone D."/>
            <person name="O'Reilly M."/>
            <person name="Ogawa K."/>
            <person name="Ogiwara A."/>
            <person name="Oudega B."/>
            <person name="Park S.-H."/>
            <person name="Parro V."/>
            <person name="Pohl T.M."/>
            <person name="Portetelle D."/>
            <person name="Porwollik S."/>
            <person name="Prescott A.M."/>
            <person name="Presecan E."/>
            <person name="Pujic P."/>
            <person name="Purnelle B."/>
            <person name="Rapoport G."/>
            <person name="Rey M."/>
            <person name="Reynolds S."/>
            <person name="Rieger M."/>
            <person name="Rivolta C."/>
            <person name="Rocha E."/>
            <person name="Roche B."/>
            <person name="Rose M."/>
            <person name="Sadaie Y."/>
            <person name="Sato T."/>
            <person name="Scanlan E."/>
            <person name="Schleich S."/>
            <person name="Schroeter R."/>
            <person name="Scoffone F."/>
            <person name="Sekiguchi J."/>
            <person name="Sekowska A."/>
            <person name="Seror S.J."/>
            <person name="Serror P."/>
            <person name="Shin B.-S."/>
            <person name="Soldo B."/>
            <person name="Sorokin A."/>
            <person name="Tacconi E."/>
            <person name="Takagi T."/>
            <person name="Takahashi H."/>
            <person name="Takemaru K."/>
            <person name="Takeuchi M."/>
            <person name="Tamakoshi A."/>
            <person name="Tanaka T."/>
            <person name="Terpstra P."/>
            <person name="Tognoni A."/>
            <person name="Tosato V."/>
            <person name="Uchiyama S."/>
            <person name="Vandenbol M."/>
            <person name="Vannier F."/>
            <person name="Vassarotti A."/>
            <person name="Viari A."/>
            <person name="Wambutt R."/>
            <person name="Wedler E."/>
            <person name="Wedler H."/>
            <person name="Weitzenegger T."/>
            <person name="Winters P."/>
            <person name="Wipat A."/>
            <person name="Yamamoto H."/>
            <person name="Yamane K."/>
            <person name="Yasumoto K."/>
            <person name="Yata K."/>
            <person name="Yoshida K."/>
            <person name="Yoshikawa H.-F."/>
            <person name="Zumstein E."/>
            <person name="Yoshikawa H."/>
            <person name="Danchin A."/>
        </authorList>
    </citation>
    <scope>NUCLEOTIDE SEQUENCE [LARGE SCALE GENOMIC DNA]</scope>
    <source>
        <strain>168</strain>
    </source>
</reference>
<reference key="3">
    <citation type="journal article" date="1995" name="J. Bacteriol.">
        <title>The cytochrome bc complex (menaquinone:cytochrome c reductase) in Bacillus subtilis has a nontraditional subunit organization.</title>
        <authorList>
            <person name="Yu J."/>
            <person name="Hederstedt L."/>
            <person name="Piggot P.J."/>
        </authorList>
    </citation>
    <scope>NUCLEOTIDE SEQUENCE [GENOMIC DNA] OF 67-148</scope>
    <source>
        <strain>168 / BR151</strain>
    </source>
</reference>
<protein>
    <recommendedName>
        <fullName>Uncharacterized protein YpiF</fullName>
    </recommendedName>
</protein>
<keyword id="KW-1185">Reference proteome</keyword>
<accession>P54391</accession>
<feature type="chain" id="PRO_0000049700" description="Uncharacterized protein YpiF">
    <location>
        <begin position="1"/>
        <end position="148"/>
    </location>
</feature>
<sequence>MRWRITDAKDYLQAKDYIDTAVIPLINIRVNNHFKMAAEKGEFTQLLSEELERQLKGRVYLLPPYTYVDRNEITVQGLKDLREELITEFPHVVLLTSDESWRAEDALGKMIVTSSVPLEHLNDSLKRKILDERTAEILNVLLQLWSTL</sequence>